<organism>
    <name type="scientific">Rotavirus A (isolate RVA/Human/Australia/McN13/1980/G3P2A[6])</name>
    <name type="common">RV-A</name>
    <dbReference type="NCBI Taxonomy" id="10955"/>
    <lineage>
        <taxon>Viruses</taxon>
        <taxon>Riboviria</taxon>
        <taxon>Orthornavirae</taxon>
        <taxon>Duplornaviricota</taxon>
        <taxon>Resentoviricetes</taxon>
        <taxon>Reovirales</taxon>
        <taxon>Sedoreoviridae</taxon>
        <taxon>Rotavirus</taxon>
        <taxon>Rotavirus A</taxon>
    </lineage>
</organism>
<keyword id="KW-0167">Capsid protein</keyword>
<keyword id="KW-0175">Coiled coil</keyword>
<keyword id="KW-1015">Disulfide bond</keyword>
<keyword id="KW-0348">Hemagglutinin</keyword>
<keyword id="KW-1032">Host cell membrane</keyword>
<keyword id="KW-1035">Host cytoplasm</keyword>
<keyword id="KW-1037">Host cytoskeleton</keyword>
<keyword id="KW-1038">Host endoplasmic reticulum</keyword>
<keyword id="KW-1043">Host membrane</keyword>
<keyword id="KW-0945">Host-virus interaction</keyword>
<keyword id="KW-0472">Membrane</keyword>
<keyword id="KW-1152">Outer capsid protein</keyword>
<keyword id="KW-1161">Viral attachment to host cell</keyword>
<keyword id="KW-1162">Viral penetration into host cytoplasm</keyword>
<keyword id="KW-1173">Viral penetration via permeabilization of host membrane</keyword>
<keyword id="KW-0946">Virion</keyword>
<keyword id="KW-1160">Virus entry into host cell</keyword>
<proteinExistence type="inferred from homology"/>
<organismHost>
    <name type="scientific">Homo sapiens</name>
    <name type="common">Human</name>
    <dbReference type="NCBI Taxonomy" id="9606"/>
</organismHost>
<feature type="chain" id="PRO_0000041069" description="Outer capsid protein VP4" evidence="1">
    <location>
        <begin position="1"/>
        <end position="776"/>
    </location>
</feature>
<feature type="chain" id="PRO_0000041070" description="Outer capsid protein VP8*" evidence="1">
    <location>
        <begin position="1"/>
        <end position="231"/>
    </location>
</feature>
<feature type="chain" id="PRO_0000041071" description="Outer capsid protein VP5*" evidence="1">
    <location>
        <begin position="248"/>
        <end position="776"/>
    </location>
</feature>
<feature type="region of interest" description="Spike head" evidence="1">
    <location>
        <begin position="65"/>
        <end position="224"/>
    </location>
</feature>
<feature type="region of interest" description="Spike body and stalk (antigen domain)" evidence="1">
    <location>
        <begin position="248"/>
        <end position="479"/>
    </location>
</feature>
<feature type="region of interest" description="Hydrophobic; possible role in virus entry into host cell" evidence="1">
    <location>
        <begin position="389"/>
        <end position="409"/>
    </location>
</feature>
<feature type="region of interest" description="Spike foot" evidence="1">
    <location>
        <begin position="510"/>
        <end position="776"/>
    </location>
</feature>
<feature type="coiled-coil region" evidence="1">
    <location>
        <begin position="484"/>
        <end position="516"/>
    </location>
</feature>
<feature type="short sequence motif" description="DGE motif; interaction with ITGA2/ITGB1 heterodimer" evidence="1">
    <location>
        <begin position="308"/>
        <end position="310"/>
    </location>
</feature>
<feature type="short sequence motif" description="YGL motif; interaction with ITGA4" evidence="1">
    <location>
        <begin position="448"/>
        <end position="450"/>
    </location>
</feature>
<feature type="short sequence motif" description="KID motif; interaction with HSPA8" evidence="1">
    <location>
        <begin position="643"/>
        <end position="645"/>
    </location>
</feature>
<feature type="site" description="Cleavage" evidence="1">
    <location>
        <begin position="231"/>
        <end position="232"/>
    </location>
</feature>
<feature type="site" description="Cleavage" evidence="1">
    <location>
        <begin position="241"/>
        <end position="242"/>
    </location>
</feature>
<feature type="site" description="Cleavage; associated with enhancement of infectivity" evidence="1">
    <location>
        <begin position="247"/>
        <end position="248"/>
    </location>
</feature>
<feature type="disulfide bond" evidence="1">
    <location>
        <begin position="318"/>
        <end position="380"/>
    </location>
</feature>
<feature type="sequence conflict" description="In Ref. 2." evidence="3" ref="2">
    <location>
        <position position="190"/>
    </location>
</feature>
<sequence length="776" mass="87794">MASLIYRQLLTNSYTVELSDEINTIGSEKSQNVTINPGPFAQTNYAPVVLESWEVNDSTTIEPVLDGPYQPTSFKPPSDYWILLNPTNQQVVLEGTNKTDIWVALLLVEPNVTNQSRQYTLFGETKQITVENNTNKWKFFEMFRSSVSAEFQHKRTLTSDTKLAGFLKHYNSVWTFHGETPHATTDYSSSTSNLSEVETTIHVEFYIIPRSQESKCVEYINTGLPPMQNTRNIVPVALSSRAVTYQRAQVNEDIIISKTSLWKEMQYNRDIIIRFKFNNSIVKLGGLGYKWSEISFKAANYQYNYLRDGEQVTAHTTCSVNGVNNFSYNGGPLPTHFSVSRYEVIKENSYVYVNYWDDSQAFRNMVYVRSLTANLNSVKCSGGNYNFQLPVGAWPVMSGGAVSLHFAGVTLSTKFTDFVSLNSLRFRFSLTVEDPPFSILRTRVSGLYGLPAFNPNSEHEYYEIARRFSLISLVPSNDDYQTPIMNSVTVRQDLERQLGDLREEFNSLSQEIAMTQLIDLALLPLDMFSMFSGIKSTIDAAKSMATKVMKKFKRSGLATSISELTRSLSNAASSVSRSSSIRSNISSISVWTDVSEQITGSSDSVRNISTQTSASRRLRLREITTQTEGMNFIDISAAVLKTKIDKSTHISPDTLPDIIETESSEKFIPKRAYRVLKDDEVMEADVDGKFFAYKVDTFEEVPFDVDKFVDLVTDSPVISAIIDFKTLKNLNDNYGITRSQALDLIRSDPRVLRDFINQNNPIIKNRIEQLILQCRL</sequence>
<protein>
    <recommendedName>
        <fullName evidence="1">Outer capsid protein VP4</fullName>
    </recommendedName>
    <alternativeName>
        <fullName evidence="1">Hemagglutinin</fullName>
    </alternativeName>
    <component>
        <recommendedName>
            <fullName evidence="1">Outer capsid protein VP8*</fullName>
        </recommendedName>
    </component>
    <component>
        <recommendedName>
            <fullName evidence="1">Outer capsid protein VP5*</fullName>
        </recommendedName>
    </component>
</protein>
<accession>P11199</accession>
<dbReference type="PIR" id="G28839">
    <property type="entry name" value="VPXRW9"/>
</dbReference>
<dbReference type="SMR" id="P11199"/>
<dbReference type="GO" id="GO:0044172">
    <property type="term" value="C:host cell endoplasmic reticulum-Golgi intermediate compartment"/>
    <property type="evidence" value="ECO:0007669"/>
    <property type="project" value="UniProtKB-SubCell"/>
</dbReference>
<dbReference type="GO" id="GO:0020002">
    <property type="term" value="C:host cell plasma membrane"/>
    <property type="evidence" value="ECO:0007669"/>
    <property type="project" value="UniProtKB-SubCell"/>
</dbReference>
<dbReference type="GO" id="GO:0044168">
    <property type="term" value="C:host cell rough endoplasmic reticulum"/>
    <property type="evidence" value="ECO:0007669"/>
    <property type="project" value="UniProtKB-SubCell"/>
</dbReference>
<dbReference type="GO" id="GO:0044163">
    <property type="term" value="C:host cytoskeleton"/>
    <property type="evidence" value="ECO:0007669"/>
    <property type="project" value="UniProtKB-SubCell"/>
</dbReference>
<dbReference type="GO" id="GO:0016020">
    <property type="term" value="C:membrane"/>
    <property type="evidence" value="ECO:0007669"/>
    <property type="project" value="UniProtKB-KW"/>
</dbReference>
<dbReference type="GO" id="GO:0039624">
    <property type="term" value="C:viral outer capsid"/>
    <property type="evidence" value="ECO:0007669"/>
    <property type="project" value="UniProtKB-UniRule"/>
</dbReference>
<dbReference type="GO" id="GO:0039665">
    <property type="term" value="P:permeabilization of host organelle membrane involved in viral entry into host cell"/>
    <property type="evidence" value="ECO:0007669"/>
    <property type="project" value="UniProtKB-UniRule"/>
</dbReference>
<dbReference type="GO" id="GO:0019062">
    <property type="term" value="P:virion attachment to host cell"/>
    <property type="evidence" value="ECO:0007669"/>
    <property type="project" value="UniProtKB-UniRule"/>
</dbReference>
<dbReference type="Gene3D" id="1.20.5.170">
    <property type="match status" value="1"/>
</dbReference>
<dbReference type="Gene3D" id="2.60.120.200">
    <property type="match status" value="1"/>
</dbReference>
<dbReference type="HAMAP" id="MF_04132">
    <property type="entry name" value="Rota_A_VP4"/>
    <property type="match status" value="1"/>
</dbReference>
<dbReference type="HAMAP" id="MF_04125">
    <property type="entry name" value="Rota_VP4"/>
    <property type="match status" value="1"/>
</dbReference>
<dbReference type="InterPro" id="IPR013320">
    <property type="entry name" value="ConA-like_dom_sf"/>
</dbReference>
<dbReference type="InterPro" id="IPR042546">
    <property type="entry name" value="Rota_A_VP4"/>
</dbReference>
<dbReference type="InterPro" id="IPR035330">
    <property type="entry name" value="Rota_VP4_MID"/>
</dbReference>
<dbReference type="InterPro" id="IPR038017">
    <property type="entry name" value="Rota_VP4_MID_sf"/>
</dbReference>
<dbReference type="InterPro" id="IPR000416">
    <property type="entry name" value="VP4_concanavalin-like"/>
</dbReference>
<dbReference type="InterPro" id="IPR035329">
    <property type="entry name" value="VP4_helical"/>
</dbReference>
<dbReference type="Pfam" id="PF17477">
    <property type="entry name" value="Rota_VP4_MID"/>
    <property type="match status" value="1"/>
</dbReference>
<dbReference type="Pfam" id="PF00426">
    <property type="entry name" value="VP4_haemagglut"/>
    <property type="match status" value="1"/>
</dbReference>
<dbReference type="Pfam" id="PF17478">
    <property type="entry name" value="VP4_helical"/>
    <property type="match status" value="1"/>
</dbReference>
<dbReference type="SUPFAM" id="SSF49899">
    <property type="entry name" value="Concanavalin A-like lectins/glucanases"/>
    <property type="match status" value="1"/>
</dbReference>
<dbReference type="SUPFAM" id="SSF111379">
    <property type="entry name" value="VP4 membrane interaction domain"/>
    <property type="match status" value="1"/>
</dbReference>
<name>VP4_ROTHN</name>
<evidence type="ECO:0000255" key="1">
    <source>
        <dbReference type="HAMAP-Rule" id="MF_04132"/>
    </source>
</evidence>
<evidence type="ECO:0000303" key="2">
    <source>
    </source>
</evidence>
<evidence type="ECO:0000305" key="3"/>
<comment type="function">
    <molecule>Outer capsid protein VP4</molecule>
    <text evidence="1">Spike-forming protein that mediates virion attachment to the host epithelial cell receptors and plays a major role in cell penetration, determination of host range restriction and virulence. Rotavirus attachment and entry into the host cell probably involves multiple sequential contacts between the outer capsid proteins VP4 and VP7, and the cell receptors. It is subsequently lost, together with VP7, following virus entry into the host cell. Following entry into the host cell, low intracellular or intravesicular Ca(2+) concentration probably causes the calcium-stabilized VP7 trimers to dissociate from the virion. This step is probably necessary for the membrane-disrupting entry step and the release of VP4, which is locked onto the virion by VP7. During the virus exit from the host cell, VP4 seems to be required to target the newly formed virions to the host cell lipid rafts.</text>
</comment>
<comment type="function">
    <molecule>Outer capsid protein VP5*</molecule>
    <text evidence="1">Forms the spike 'foot' and 'body' and acts as a membrane permeabilization protein that mediates release of viral particles from endosomal compartments into the cytoplasm. During entry, the part of VP5* that protrudes from the virus folds back on itself and reorganizes from a local dimer to a trimer. This reorganization may be linked to membrane penetration by exposing VP5* hydrophobic region. In integrin-dependent strains, VP5* targets the integrin heterodimer ITGA2/ITGB1 for cell attachment.</text>
</comment>
<comment type="function">
    <molecule>Outer capsid protein VP8*</molecule>
    <text evidence="1">Forms the head of the spikes and mediates the recognition of specific host cell surface glycans. It is the viral hemagglutinin and an important target of neutralizing antibodies. In sialic acid-dependent strains, VP8* binds to host cell sialic acid, most probably a ganglioside, providing the initial contact. In some other strains, VP8* mediates the attachment to histo-blood group antigens (HBGAs) for viral entry.</text>
</comment>
<comment type="subunit">
    <molecule>Outer capsid protein VP4</molecule>
    <text evidence="1">Homotrimer. VP4 adopts a dimeric appearance above the capsid surface, while forming a trimeric base anchored inside the capsid layer. Only hints of the third molecule are observed above the capsid surface. It probably performs a series of molecular rearrangements during viral entry. Prior to trypsin cleavage, it is flexible. The priming trypsin cleavage triggers its rearrangement into rigid spikes with approximate two-fold symmetry of their protruding parts. After an unknown second triggering event, cleaved VP4 may undergo another rearrangement, in which two VP5* subunits fold back on themselves and join a third subunit to form a tightly associated trimer, shaped like a folded umbrella. Interacts with VP6. Interacts with VP7.</text>
</comment>
<comment type="subunit">
    <molecule>Outer capsid protein VP5*</molecule>
    <text evidence="1">Homotrimer. The trimer is coiled-coil stabilized by its C-terminus, however, its N-terminus, known as antigen domain or 'body', seems to be flexible allowing it to self-associate either as a dimer or a trimer.</text>
</comment>
<comment type="subcellular location">
    <molecule>Outer capsid protein VP4</molecule>
    <subcellularLocation>
        <location evidence="1">Virion</location>
    </subcellularLocation>
    <subcellularLocation>
        <location evidence="1">Host rough endoplasmic reticulum</location>
    </subcellularLocation>
    <subcellularLocation>
        <location evidence="1">Host cell membrane</location>
    </subcellularLocation>
    <subcellularLocation>
        <location evidence="1">Host cytoplasm</location>
        <location evidence="1">Host cytoskeleton</location>
    </subcellularLocation>
    <subcellularLocation>
        <location evidence="1">Host endoplasmic reticulum-Golgi intermediate compartment</location>
    </subcellularLocation>
    <text evidence="1">The outer layer contains 180 copies of VP4, grouped as 60 dimers. Immature double-layered particles assembled in the cytoplasm bud across the membrane of the endoplasmic reticulum, acquiring during this process a transient lipid membrane that is modified with the ER resident viral glycoproteins NSP4 and VP7; these enveloped particles also contain VP4. As the particles move towards the interior of the ER cisternae, the transient lipid membrane and the non-structural protein NSP4 are lost, while the virus surface proteins VP4 and VP7 rearrange to form the outermost virus protein layer, yielding mature infectious triple-layered particles. VP4 also seems to associate with lipid rafts of the host cell membrane probably for the exit of the virus from the infected cell by an alternate pathway.</text>
</comment>
<comment type="subcellular location">
    <molecule>Outer capsid protein VP8*</molecule>
    <subcellularLocation>
        <location evidence="1">Virion</location>
    </subcellularLocation>
    <text evidence="1">Outer capsid protein.</text>
</comment>
<comment type="subcellular location">
    <molecule>Outer capsid protein VP5*</molecule>
    <subcellularLocation>
        <location evidence="1">Virion</location>
    </subcellularLocation>
    <text evidence="1">Outer capsid protein.</text>
</comment>
<comment type="domain">
    <molecule>Outer capsid protein VP4</molecule>
    <text evidence="1">The VP4 spike is divided into a foot, a stalk and body, and a head.</text>
</comment>
<comment type="PTM">
    <molecule>Outer capsid protein VP4</molecule>
    <text evidence="1">Proteolytic cleavage by trypsin results in activation of VP4 functions and greatly increases infectivity. The penetration into the host cell is dependent on trypsin treatment of VP4. It produces two peptides, VP5* and VP8* that remain associated with the virion. Cleavage of VP4 by trypsin probably occurs in vivo in the lumen of the intestine prior to infection of enterocytes. Trypsin seems to be incorporated into the three-layered viral particles but remains inactive as long as the viral outer capsid is intact and would only be activated upon the solubilization of the latter.</text>
</comment>
<comment type="miscellaneous">
    <text evidence="2">This strain probably does not use sialic acid to attach to the host cell.</text>
</comment>
<comment type="miscellaneous">
    <text evidence="1">In group A rotaviruses, VP4 defines the P serotype.</text>
</comment>
<comment type="miscellaneous">
    <text evidence="1">Some rotavirus strains are neuraminidase-sensitive and require sialic acid to attach to the cell surface. Some rotavirus strains are integrin-dependent. Some rotavirus strains depend on ganglioside for their entry into the host cell. Hsp70 also seems to be involved in the entry of some strains.</text>
</comment>
<comment type="similarity">
    <text evidence="1">Belongs to the rotavirus VP4 family.</text>
</comment>
<reference key="1">
    <citation type="journal article" date="1988" name="J. Virol.">
        <title>Sequence of the fourth gene of human rotaviruses recovered from asymptomatic or symptomatic infections.</title>
        <authorList>
            <person name="Gorziglia M."/>
            <person name="Green K.Y."/>
            <person name="Nishikawa K."/>
            <person name="Taniguchi K."/>
            <person name="Jones R.W."/>
            <person name="Kapikian A.Z."/>
            <person name="Chanock R.M."/>
        </authorList>
    </citation>
    <scope>NUCLEOTIDE SEQUENCE [GENOMIC RNA]</scope>
</reference>
<reference key="2">
    <citation type="journal article" date="1986" name="Proc. Natl. Acad. Sci. U.S.A.">
        <title>Conservation of amino acid sequence of VP8 and cleavage region of 84-kDa outer capsid protein among rotaviruses recovered from asymptomatic neonatal infection.</title>
        <authorList>
            <person name="Gorziglia M."/>
            <person name="Hoshino Y."/>
            <person name="Buckler-White A."/>
            <person name="Blumentals I."/>
            <person name="Glass R."/>
            <person name="Flores J."/>
            <person name="Kapikian A.Z."/>
            <person name="Chanock R.M."/>
        </authorList>
    </citation>
    <scope>NUCLEOTIDE SEQUENCE [GENOMIC RNA] OF 1-281</scope>
</reference>
<reference key="3">
    <citation type="journal article" date="2006" name="Glycoconj. J.">
        <title>Role of sialic acids in rotavirus infection.</title>
        <authorList>
            <person name="Isa P."/>
            <person name="Arias C.F."/>
            <person name="Lopez S."/>
        </authorList>
    </citation>
    <scope>REVIEW</scope>
</reference>